<sequence>MESFVAMKVVCITVLFVIVAVNESATSEARTSSAAKETKKKNVTLHFPSYIRNPQKLALELLEICKNNKSRNSLPSTNYSAINDKYVDFKNCTFLCKHAEDRNVTLDLPPNTLCGPNGETCAEKSKCVGHIPGC</sequence>
<protein>
    <recommendedName>
        <fullName evidence="9">Salivary protein 15 Iric-1</fullName>
        <shortName evidence="9 10 11">Salp15 Iric-1</shortName>
    </recommendedName>
    <alternativeName>
        <fullName evidence="9">Probable ortholog of I.scapularis salivary protein 15</fullName>
    </alternativeName>
    <alternativeName>
        <fullName evidence="12">Salp15-like</fullName>
    </alternativeName>
</protein>
<proteinExistence type="evidence at protein level"/>
<comment type="function">
    <text evidence="1 5 6 8">Salivary tick protein that downregulates host immune system by binding to both dendritic cells, and CD4(+) T cells. Specifically binds to the CD4 coreceptor on T cells. This interaction prevents the activation of the Src kinase, Lck, and its downstream substrate Zap-70, and results in deficient activation of PLCgamma1, the repression of calcium fluxes triggered by T-cell antigen receptor (TCR) ligation, and a subsequent reduction in interleukin-2 production. This salivary protein also binds to DC-SIGN (CD209) on dendritic cells (DC) and activates the Raf-1 kinase/MEK signaling pathway that results in down-regulating expression of pro-inflammatory cytokines. Furthermore, it inhibits T cell proliferation induced by DCs (By similarity). In addition, it inhibits in vitro keratinocyte inflammation induced by Borrelia burgdorferi or by the major outer surface protein (OspC) of Borrelia (PubMed:21134970). In addition, it downregulates chemokines and monocyte chemoattractant protein 1, as well as several antimicrobial peptides such as defensins, cathelicidin, psoriasin, and RNase 7 (PubMed:21134970). Apart from its immunomodulatory activities, it is also associated with protection of Borrelia spirochetes from antibody-mediated killing through its binding to OspC (PubMed:18752445, PubMed:33401196). In vivo, tests on different immune disease animal models show promising therapeutic results, e.g., in inhibiting HIV infection, experimental autoimmune encephalomyelitis, transplantation rejection, and asthma (By similarity).</text>
</comment>
<comment type="function">
    <text evidence="4">(Microbial infection) Protects Borrelia garinii (strain VSBP) from host complement-mediated killing by binding to the surface of spirochetes and preventing deposition of host C5b-9 membrane attack complexes (PubMed:18426890). Protects Borrelia garinii (strain A87S) from host complement-mediated killing (PubMed:18426890).</text>
</comment>
<comment type="function">
    <text evidence="4">(Microbial infection) Partially protects Borrelia burgdorferi (strains VS215 and B31) from host complement-mediated killing.</text>
</comment>
<comment type="subunit">
    <text evidence="1 7">Monomer (PubMed:25628987). Interacts with host CD4 (By similarity). Interacts with host DC-SIGN (CD209) (By similarity).</text>
</comment>
<comment type="subunit">
    <text evidence="5 7 8">(Microbial infection) Interacts with Borrelia outer surface protein C (OspC).</text>
</comment>
<comment type="subcellular location">
    <subcellularLocation>
        <location evidence="13">Secreted</location>
    </subcellularLocation>
</comment>
<comment type="tissue specificity">
    <text evidence="3">Expressed in salivary glands (PubMed:17896872). Detected in fed adult female (PubMed:17896872).</text>
</comment>
<comment type="induction">
    <text evidence="1 13">By feeding (Probable). By the presence of Borrelia burgdorferi (By similarity).</text>
</comment>
<comment type="similarity">
    <text evidence="12">Belongs to the salp15 family.</text>
</comment>
<evidence type="ECO:0000250" key="1">
    <source>
        <dbReference type="UniProtKB" id="Q95WZ4"/>
    </source>
</evidence>
<evidence type="ECO:0000255" key="2">
    <source>
        <dbReference type="PROSITE-ProRule" id="PRU00498"/>
    </source>
</evidence>
<evidence type="ECO:0000269" key="3">
    <source>
    </source>
</evidence>
<evidence type="ECO:0000269" key="4">
    <source>
    </source>
</evidence>
<evidence type="ECO:0000269" key="5">
    <source>
    </source>
</evidence>
<evidence type="ECO:0000269" key="6">
    <source>
    </source>
</evidence>
<evidence type="ECO:0000269" key="7">
    <source>
    </source>
</evidence>
<evidence type="ECO:0000269" key="8">
    <source>
    </source>
</evidence>
<evidence type="ECO:0000303" key="9">
    <source>
    </source>
</evidence>
<evidence type="ECO:0000303" key="10">
    <source>
    </source>
</evidence>
<evidence type="ECO:0000303" key="11">
    <source>
    </source>
</evidence>
<evidence type="ECO:0000305" key="12"/>
<evidence type="ECO:0000305" key="13">
    <source>
    </source>
</evidence>
<evidence type="ECO:0000312" key="14">
    <source>
        <dbReference type="EMBL" id="ABU93613.1"/>
    </source>
</evidence>
<dbReference type="EMBL" id="EU128526">
    <property type="protein sequence ID" value="ABU93613.1"/>
    <property type="molecule type" value="mRNA"/>
</dbReference>
<dbReference type="SMR" id="A8CZZ0"/>
<dbReference type="GO" id="GO:0005576">
    <property type="term" value="C:extracellular region"/>
    <property type="evidence" value="ECO:0007669"/>
    <property type="project" value="UniProtKB-SubCell"/>
</dbReference>
<dbReference type="InterPro" id="IPR021971">
    <property type="entry name" value="Salp15"/>
</dbReference>
<dbReference type="Pfam" id="PF12115">
    <property type="entry name" value="Salp15"/>
    <property type="match status" value="1"/>
</dbReference>
<organism>
    <name type="scientific">Ixodes ricinus</name>
    <name type="common">Common tick</name>
    <name type="synonym">Acarus ricinus</name>
    <dbReference type="NCBI Taxonomy" id="34613"/>
    <lineage>
        <taxon>Eukaryota</taxon>
        <taxon>Metazoa</taxon>
        <taxon>Ecdysozoa</taxon>
        <taxon>Arthropoda</taxon>
        <taxon>Chelicerata</taxon>
        <taxon>Arachnida</taxon>
        <taxon>Acari</taxon>
        <taxon>Parasitiformes</taxon>
        <taxon>Ixodida</taxon>
        <taxon>Ixodoidea</taxon>
        <taxon>Ixodidae</taxon>
        <taxon>Ixodinae</taxon>
        <taxon>Ixodes</taxon>
    </lineage>
</organism>
<reference evidence="14" key="1">
    <citation type="journal article" date="2007" name="Vector Borne Zoonotic Dis.">
        <title>Identification of Salp15 homologues in Ixodes ricinus ticks.</title>
        <authorList>
            <person name="Hovius J.W."/>
            <person name="Ramamoorthi N."/>
            <person name="Veer C.V."/>
            <person name="De Groot K.A."/>
            <person name="Nijhof A.M."/>
            <person name="Jongejan F."/>
            <person name="Van Dam A.P."/>
            <person name="Fikrig E."/>
        </authorList>
    </citation>
    <scope>NUCLEOTIDE SEQUENCE [MRNA]</scope>
    <scope>INDUCTION</scope>
    <scope>TISSUE SPECIFICITY</scope>
    <source>
        <tissue>Salivary gland</tissue>
    </source>
</reference>
<reference key="2">
    <citation type="journal article" date="2008" name="Infect. Immun.">
        <title>The tick salivary protein Salp15 inhibits the killing of serum-sensitive Borrelia burgdorferi sensu lato isolates.</title>
        <authorList>
            <person name="Schuijt T.J."/>
            <person name="Hovius J.W."/>
            <person name="van Burgel N.D."/>
            <person name="Ramamoorthi N."/>
            <person name="Fikrig E."/>
            <person name="van Dam A.P."/>
        </authorList>
    </citation>
    <scope>FUNCTION (MICROBIAL INFECTION)</scope>
</reference>
<reference evidence="12" key="3">
    <citation type="journal article" date="2008" name="J. Infect. Dis.">
        <title>Preferential protection of Borrelia burgdorferi sensu stricto by a Salp15 homologue in Ixodes ricinus saliva.</title>
        <authorList>
            <person name="Hovius J.W."/>
            <person name="Schuijt T.J."/>
            <person name="de Groot K.A."/>
            <person name="Roelofs J.J."/>
            <person name="Oei G.A."/>
            <person name="Marquart J.A."/>
            <person name="de Beer R."/>
            <person name="van 't Veer C."/>
            <person name="van der Poll T."/>
            <person name="Ramamoorthi N."/>
            <person name="Fikrig E."/>
            <person name="van Dam A.P."/>
        </authorList>
    </citation>
    <scope>FUNCTION</scope>
    <scope>INTERACTION WITH BORRELIA OUTER SURFACE PROTEIN C</scope>
    <scope>RECOMBINANT EXPRESSION</scope>
</reference>
<reference evidence="12" key="4">
    <citation type="journal article" date="2011" name="Infect. Immun.">
        <title>Antialarmin effect of tick saliva during the transmission of Lyme disease.</title>
        <authorList>
            <person name="Marchal C."/>
            <person name="Schramm F."/>
            <person name="Kern A."/>
            <person name="Luft B.J."/>
            <person name="Yang X."/>
            <person name="Schuijt T.J."/>
            <person name="Hovius J.W."/>
            <person name="Jaulhac B."/>
            <person name="Boulanger N."/>
        </authorList>
    </citation>
    <scope>FUNCTION</scope>
</reference>
<reference key="5">
    <citation type="journal article" date="2011" name="Infect. Immun.">
        <title>Antialarmin effect of tick saliva during the transmission of Lyme disease.</title>
        <authorList>
            <person name="Marchal C."/>
            <person name="Schramm F."/>
            <person name="Kern A."/>
            <person name="Luft B.J."/>
            <person name="Yang X."/>
            <person name="Schuijt T.J."/>
            <person name="Hovius J.W."/>
            <person name="Jaulhac B."/>
            <person name="Boulanger N."/>
        </authorList>
    </citation>
    <scope>ERRATUM OF PUBMED:21134970</scope>
</reference>
<reference evidence="12" key="6">
    <citation type="journal article" date="2015" name="FEBS Open Bio">
        <title>Soluble cysteine-rich tick saliva proteins Salp15 and Iric-1 from E. coli.</title>
        <authorList>
            <person name="Kolb P."/>
            <person name="Vorreiter J."/>
            <person name="Habicht J."/>
            <person name="Bentrop D."/>
            <person name="Wallich R."/>
            <person name="Nassal M."/>
        </authorList>
    </citation>
    <scope>SUBUNIT</scope>
    <scope>INTERACTION WITH BORRELIA OUTER SURFACE PROTEIN C (OSPC)</scope>
    <scope>BORRELIA OSPC-BINDING REGION</scope>
</reference>
<reference key="7">
    <citation type="journal article" date="2021" name="Ticks Tick Borne Dis.">
        <title>Strong interactions between Salp15 homologues from the tick I. ricinus and distinct types of the outer surface OspC protein from Borrelia.</title>
        <authorList>
            <person name="Bierwagen P."/>
            <person name="Sliwiak J."/>
            <person name="Jaskolski M."/>
            <person name="Urbanowicz A."/>
        </authorList>
    </citation>
    <scope>FUNCTION</scope>
    <scope>INTERACTION WITH BORRELIA OUTER SURFACE PROTEIN C</scope>
    <scope>RECOMBINANT EXPRESSION</scope>
</reference>
<accession>A8CZZ0</accession>
<feature type="signal peptide" evidence="1">
    <location>
        <begin position="1"/>
        <end position="21"/>
    </location>
</feature>
<feature type="chain" id="PRO_5002720433" description="Salivary protein 15 Iric-1" evidence="1">
    <location>
        <begin position="22"/>
        <end position="134"/>
    </location>
</feature>
<feature type="region of interest" description="Required for Borrelia OspC-binding" evidence="7">
    <location>
        <begin position="48"/>
        <end position="67"/>
    </location>
</feature>
<feature type="region of interest" description="CD4-binding" evidence="1">
    <location>
        <begin position="115"/>
        <end position="134"/>
    </location>
</feature>
<feature type="glycosylation site" description="N-linked (GlcNAc...) asparagine" evidence="2">
    <location>
        <position position="22"/>
    </location>
</feature>
<feature type="glycosylation site" description="N-linked (GlcNAc...) asparagine" evidence="2">
    <location>
        <position position="91"/>
    </location>
</feature>
<feature type="glycosylation site" description="N-linked (GlcNAc...) asparagine" evidence="2">
    <location>
        <position position="103"/>
    </location>
</feature>
<keyword id="KW-0325">Glycoprotein</keyword>
<keyword id="KW-0964">Secreted</keyword>
<keyword id="KW-0732">Signal</keyword>
<name>SP151_IXORI</name>